<evidence type="ECO:0000250" key="1">
    <source>
        <dbReference type="UniProtKB" id="P05719"/>
    </source>
</evidence>
<evidence type="ECO:0000303" key="2">
    <source>
    </source>
</evidence>
<evidence type="ECO:0000305" key="3"/>
<evidence type="ECO:0000305" key="4">
    <source>
    </source>
</evidence>
<gene>
    <name type="ordered locus">MPN_201</name>
    <name type="ORF">GT9_orf238</name>
    <name type="ORF">MP630</name>
</gene>
<protein>
    <recommendedName>
        <fullName evidence="2">Putative type I specificity subunit S.MpnORF201P</fullName>
        <shortName>S protein</shortName>
        <shortName evidence="2">S.MpnORF201P</shortName>
    </recommendedName>
    <alternativeName>
        <fullName>Putative type-1 restriction enzyme specificity subunit MPN_201</fullName>
    </alternativeName>
    <alternativeName>
        <fullName>S.MpnORFFP</fullName>
    </alternativeName>
</protein>
<comment type="function">
    <text evidence="2 4">The specificity (S) subunit of a type I methyltransferase (MTase); this subunit dictates DNA sequence specificity. The single R subunit has multiple frameshifts and is probably not expressed.</text>
</comment>
<comment type="subunit">
    <text evidence="1">The methyltransferase is composed of M and S polypeptides.</text>
</comment>
<comment type="domain">
    <text evidence="1">Contains two DNA recognition domains, each specifying recognition of one of the two defined components of the target sequence.</text>
</comment>
<comment type="similarity">
    <text evidence="3">Belongs to the type-I restriction system S methylase family.</text>
</comment>
<sequence>MAEIPIDFPPLKIQEKIATILDTFTELRARKKQYAFYRDYLLNQENIRKIYGANIPFETFQVKDICEIRRGRAITKAYIRNNPGENPVYSAATTNDGELGHIKDCDFDGEYITWTTNGYAGVVFYRNGKFNASQDCGVLKVKNKKICTKFLSLLLEIEATKFVHNLASRPKLSQKVMAEIELSFPPLEIQEKIADILCAFEKLCNDLVEGIPAEIELRKKQLDYYQNFLFNWVQKIRN</sequence>
<reference key="1">
    <citation type="journal article" date="1996" name="Nucleic Acids Res.">
        <title>Sequence analysis of 56 kb from the genome of the bacterium Mycoplasma pneumoniae comprising the dnaA region, the atp operon and a cluster of ribosomal protein genes.</title>
        <authorList>
            <person name="Hilbert H."/>
            <person name="Himmelreich R."/>
            <person name="Plagens H."/>
            <person name="Herrmann R."/>
        </authorList>
    </citation>
    <scope>NUCLEOTIDE SEQUENCE [GENOMIC DNA]</scope>
    <source>
        <strain>ATCC 29342 / M129 / Subtype 1</strain>
    </source>
</reference>
<reference key="2">
    <citation type="journal article" date="1996" name="Nucleic Acids Res.">
        <title>Complete sequence analysis of the genome of the bacterium Mycoplasma pneumoniae.</title>
        <authorList>
            <person name="Himmelreich R."/>
            <person name="Hilbert H."/>
            <person name="Plagens H."/>
            <person name="Pirkl E."/>
            <person name="Li B.-C."/>
            <person name="Herrmann R."/>
        </authorList>
    </citation>
    <scope>NUCLEOTIDE SEQUENCE [LARGE SCALE GENOMIC DNA]</scope>
    <source>
        <strain>ATCC 29342 / M129 / Subtype 1</strain>
    </source>
</reference>
<reference key="3">
    <citation type="journal article" date="2003" name="Nucleic Acids Res.">
        <title>A nomenclature for restriction enzymes, DNA methyltransferases, homing endonucleases and their genes.</title>
        <authorList>
            <person name="Roberts R.J."/>
            <person name="Belfort M."/>
            <person name="Bestor T."/>
            <person name="Bhagwat A.S."/>
            <person name="Bickle T.A."/>
            <person name="Bitinaite J."/>
            <person name="Blumenthal R.M."/>
            <person name="Degtyarev S.K."/>
            <person name="Dryden D.T."/>
            <person name="Dybvig K."/>
            <person name="Firman K."/>
            <person name="Gromova E.S."/>
            <person name="Gumport R.I."/>
            <person name="Halford S.E."/>
            <person name="Hattman S."/>
            <person name="Heitman J."/>
            <person name="Hornby D.P."/>
            <person name="Janulaitis A."/>
            <person name="Jeltsch A."/>
            <person name="Josephsen J."/>
            <person name="Kiss A."/>
            <person name="Klaenhammer T.R."/>
            <person name="Kobayashi I."/>
            <person name="Kong H."/>
            <person name="Krueger D.H."/>
            <person name="Lacks S."/>
            <person name="Marinus M.G."/>
            <person name="Miyahara M."/>
            <person name="Morgan R.D."/>
            <person name="Murray N.E."/>
            <person name="Nagaraja V."/>
            <person name="Piekarowicz A."/>
            <person name="Pingoud A."/>
            <person name="Raleigh E."/>
            <person name="Rao D.N."/>
            <person name="Reich N."/>
            <person name="Repin V.E."/>
            <person name="Selker E.U."/>
            <person name="Shaw P.C."/>
            <person name="Stein D.C."/>
            <person name="Stoddard B.L."/>
            <person name="Szybalski W."/>
            <person name="Trautner T.A."/>
            <person name="Van Etten J.L."/>
            <person name="Vitor J.M."/>
            <person name="Wilson G.G."/>
            <person name="Xu S.Y."/>
        </authorList>
    </citation>
    <scope>NOMENCLATURE</scope>
</reference>
<accession>Q50287</accession>
<organism>
    <name type="scientific">Mycoplasma pneumoniae (strain ATCC 29342 / M129 / Subtype 1)</name>
    <name type="common">Mycoplasmoides pneumoniae</name>
    <dbReference type="NCBI Taxonomy" id="272634"/>
    <lineage>
        <taxon>Bacteria</taxon>
        <taxon>Bacillati</taxon>
        <taxon>Mycoplasmatota</taxon>
        <taxon>Mycoplasmoidales</taxon>
        <taxon>Mycoplasmoidaceae</taxon>
        <taxon>Mycoplasmoides</taxon>
    </lineage>
</organism>
<proteinExistence type="inferred from homology"/>
<name>T1SF_MYCPN</name>
<feature type="chain" id="PRO_0000198050" description="Putative type I specificity subunit S.MpnORF201P">
    <location>
        <begin position="1"/>
        <end position="238"/>
    </location>
</feature>
<dbReference type="EMBL" id="U34795">
    <property type="protein sequence ID" value="AAC43680.1"/>
    <property type="molecule type" value="Genomic_DNA"/>
</dbReference>
<dbReference type="EMBL" id="U00089">
    <property type="protein sequence ID" value="AAB96278.1"/>
    <property type="molecule type" value="Genomic_DNA"/>
</dbReference>
<dbReference type="PIR" id="S62809">
    <property type="entry name" value="S62809"/>
</dbReference>
<dbReference type="SMR" id="Q50287"/>
<dbReference type="STRING" id="272634.MPN_201"/>
<dbReference type="REBASE" id="6700">
    <property type="entry name" value="S.MpnORF201P"/>
</dbReference>
<dbReference type="EnsemblBacteria" id="AAB96278">
    <property type="protein sequence ID" value="AAB96278"/>
    <property type="gene ID" value="MPN_201"/>
</dbReference>
<dbReference type="KEGG" id="mpn:MPN_201"/>
<dbReference type="HOGENOM" id="CLU_021095_6_2_14"/>
<dbReference type="PRO" id="PR:Q50287"/>
<dbReference type="Proteomes" id="UP000000808">
    <property type="component" value="Chromosome"/>
</dbReference>
<dbReference type="GO" id="GO:0003677">
    <property type="term" value="F:DNA binding"/>
    <property type="evidence" value="ECO:0007669"/>
    <property type="project" value="UniProtKB-KW"/>
</dbReference>
<dbReference type="GO" id="GO:0009307">
    <property type="term" value="P:DNA restriction-modification system"/>
    <property type="evidence" value="ECO:0007669"/>
    <property type="project" value="UniProtKB-KW"/>
</dbReference>
<dbReference type="CDD" id="cd17255">
    <property type="entry name" value="RMtype1_S_Fco49512ORF2615P-TRD2-CR2_like"/>
    <property type="match status" value="1"/>
</dbReference>
<dbReference type="Gene3D" id="3.90.220.20">
    <property type="entry name" value="DNA methylase specificity domains"/>
    <property type="match status" value="1"/>
</dbReference>
<dbReference type="InterPro" id="IPR000055">
    <property type="entry name" value="Restrct_endonuc_typeI_TRD"/>
</dbReference>
<dbReference type="InterPro" id="IPR044946">
    <property type="entry name" value="Restrct_endonuc_typeI_TRD_sf"/>
</dbReference>
<dbReference type="InterPro" id="IPR051212">
    <property type="entry name" value="Type-I_RE_S_subunit"/>
</dbReference>
<dbReference type="PANTHER" id="PTHR43140:SF1">
    <property type="entry name" value="TYPE I RESTRICTION ENZYME ECOKI SPECIFICITY SUBUNIT"/>
    <property type="match status" value="1"/>
</dbReference>
<dbReference type="PANTHER" id="PTHR43140">
    <property type="entry name" value="TYPE-1 RESTRICTION ENZYME ECOKI SPECIFICITY PROTEIN"/>
    <property type="match status" value="1"/>
</dbReference>
<dbReference type="Pfam" id="PF01420">
    <property type="entry name" value="Methylase_S"/>
    <property type="match status" value="1"/>
</dbReference>
<dbReference type="SUPFAM" id="SSF116734">
    <property type="entry name" value="DNA methylase specificity domain"/>
    <property type="match status" value="2"/>
</dbReference>
<keyword id="KW-0238">DNA-binding</keyword>
<keyword id="KW-1185">Reference proteome</keyword>
<keyword id="KW-0680">Restriction system</keyword>